<keyword id="KW-0091">Biomineralization</keyword>
<keyword id="KW-0408">Iron</keyword>
<keyword id="KW-1281">Magnetosome</keyword>
<keyword id="KW-0472">Membrane</keyword>
<keyword id="KW-0479">Metal-binding</keyword>
<keyword id="KW-1185">Reference proteome</keyword>
<keyword id="KW-0812">Transmembrane</keyword>
<keyword id="KW-1133">Transmembrane helix</keyword>
<accession>A0L9X3</accession>
<proteinExistence type="evidence at protein level"/>
<comment type="function">
    <text evidence="6 7 8 13">Probably helps control the size of magnetite crystals; in vitro synthesis of magnetite yields larger and more well-developed magnetite crystals in the presence of purified MamC (PubMed:25874532, PubMed:26970040). Binds Fe(3+) (PubMed:25874532). The lumenal domain probably binds magnetite crystals, affecting crystal size and shape (Probable). Purified MamC self-assembles into micelles in the presence of ferric chloride hexahydrate (FeCl(3).6H(2)O); both oxygen and iron are present in the proteinaceous micelles. Whether this is relevant in vivo is unknown (Ref.3).</text>
</comment>
<comment type="subunit">
    <text evidence="2">Probably interacts with MamA.</text>
</comment>
<comment type="subcellular location">
    <subcellularLocation>
        <location evidence="5">Magnetosome membrane</location>
        <topology evidence="3">Multi-pass membrane protein</topology>
    </subcellularLocation>
</comment>
<comment type="domain">
    <text evidence="1 13">The lumenal magnetite interacting component (MIC, residues 37-57) probably binds magnetite.</text>
</comment>
<comment type="miscellaneous">
    <text evidence="11">This bacteria makes magnetosomes having a pseudo-hexagonal prismatic crystal of magnetite (Fe(3)O(4)).</text>
</comment>
<comment type="similarity">
    <text evidence="10">Belongs to the magnetosome MamC family.</text>
</comment>
<organism>
    <name type="scientific">Magnetococcus marinus (strain ATCC BAA-1437 / JCM 17883 / MC-1)</name>
    <dbReference type="NCBI Taxonomy" id="156889"/>
    <lineage>
        <taxon>Bacteria</taxon>
        <taxon>Pseudomonadati</taxon>
        <taxon>Pseudomonadota</taxon>
        <taxon>Alphaproteobacteria</taxon>
        <taxon>Magnetococcales</taxon>
        <taxon>Magnetococcaceae</taxon>
        <taxon>Magnetococcus</taxon>
    </lineage>
</organism>
<gene>
    <name evidence="9" type="primary">mamC</name>
    <name type="ordered locus">Mmc1_2265</name>
</gene>
<protein>
    <recommendedName>
        <fullName evidence="10">Magnetosome protein MamC</fullName>
    </recommendedName>
</protein>
<name>MAMC_MAGMM</name>
<sequence>MAAFNLALYLSKSIPGVGVLGGVIGGSAALAKNLKAKQRGEITTEEAVIDTGKEALGAGLATTVSAYAAGVVGGGLVVSLGTAFAVAVAGKYAWDYGMEQMEAKLQEKKHQEQGGQTYGDNPDPFDPQELETP</sequence>
<evidence type="ECO:0000250" key="1">
    <source>
        <dbReference type="UniProtKB" id="Q2W8S0"/>
    </source>
</evidence>
<evidence type="ECO:0000250" key="2">
    <source>
        <dbReference type="UniProtKB" id="Q93DY1"/>
    </source>
</evidence>
<evidence type="ECO:0000255" key="3"/>
<evidence type="ECO:0000256" key="4">
    <source>
        <dbReference type="SAM" id="MobiDB-lite"/>
    </source>
</evidence>
<evidence type="ECO:0000269" key="5">
    <source>
    </source>
</evidence>
<evidence type="ECO:0000269" key="6">
    <source>
    </source>
</evidence>
<evidence type="ECO:0000269" key="7">
    <source>
    </source>
</evidence>
<evidence type="ECO:0000269" key="8">
    <source ref="3"/>
</evidence>
<evidence type="ECO:0000303" key="9">
    <source>
    </source>
</evidence>
<evidence type="ECO:0000305" key="10"/>
<evidence type="ECO:0000305" key="11">
    <source>
    </source>
</evidence>
<evidence type="ECO:0000305" key="12">
    <source>
    </source>
</evidence>
<evidence type="ECO:0000305" key="13">
    <source>
    </source>
</evidence>
<feature type="chain" id="PRO_0000447791" description="Magnetosome protein MamC">
    <location>
        <begin position="1"/>
        <end position="133"/>
    </location>
</feature>
<feature type="topological domain" description="Cytoplasmic" evidence="10">
    <location>
        <begin position="1"/>
        <end position="5"/>
    </location>
</feature>
<feature type="transmembrane region" description="Helical" evidence="3">
    <location>
        <begin position="6"/>
        <end position="26"/>
    </location>
</feature>
<feature type="topological domain" description="Lumenal" evidence="12">
    <location>
        <begin position="27"/>
        <end position="67"/>
    </location>
</feature>
<feature type="transmembrane region" description="Helical" evidence="3">
    <location>
        <begin position="68"/>
        <end position="88"/>
    </location>
</feature>
<feature type="topological domain" description="Cytoplasmic" evidence="10">
    <location>
        <begin position="89"/>
        <end position="133"/>
    </location>
</feature>
<feature type="region of interest" description="Magnetite interacting component (MIC) binds magnetite" evidence="1 13">
    <location>
        <begin position="37"/>
        <end position="57"/>
    </location>
</feature>
<feature type="region of interest" description="Disordered" evidence="4">
    <location>
        <begin position="105"/>
        <end position="133"/>
    </location>
</feature>
<reference key="1">
    <citation type="journal article" date="2009" name="Appl. Environ. Microbiol.">
        <title>Complete genome sequence of the chemolithoautotrophic marine magnetotactic coccus strain MC-1.</title>
        <authorList>
            <person name="Schubbe S."/>
            <person name="Williams T.J."/>
            <person name="Xie G."/>
            <person name="Kiss H.E."/>
            <person name="Brettin T.S."/>
            <person name="Martinez D."/>
            <person name="Ross C.A."/>
            <person name="Schuler D."/>
            <person name="Cox B.L."/>
            <person name="Nealson K.H."/>
            <person name="Bazylinski D.A."/>
        </authorList>
    </citation>
    <scope>NUCLEOTIDE SEQUENCE [LARGE SCALE GENOMIC DNA]</scope>
    <source>
        <strain>ATCC BAA-1437 / JCM 17883 / MC-1</strain>
    </source>
</reference>
<reference key="2">
    <citation type="journal article" date="2014" name="Arch. Microbiol.">
        <title>Subcellular localization of the magnetosome protein MamC in the marine magnetotactic bacterium Magnetococcus marinus strain MC-1 using immunoelectron microscopy.</title>
        <authorList>
            <person name="Valverde-Tercedor C."/>
            <person name="Abadia-Molina F."/>
            <person name="Martinez-Bueno M."/>
            <person name="Pineda-Molina E."/>
            <person name="Chen L."/>
            <person name="Oestreicher Z."/>
            <person name="Lower B.H."/>
            <person name="Lower S.K."/>
            <person name="Bazylinski D.A."/>
            <person name="Jimenez-Lopez C."/>
        </authorList>
    </citation>
    <scope>IDENTIFICATION BY MASS SPECTROMETRY</scope>
    <scope>SUBCELLULAR LOCATION</scope>
    <source>
        <strain>ATCC BAA-1437 / JCM 17883 / MC-1</strain>
    </source>
</reference>
<reference key="3">
    <citation type="online journal article" date="2014" name="J. Nanomater. 320124">
        <title>Visualization of iron-binding micelles in acidic recombinant biomineralization protein, MamC.</title>
        <authorList>
            <person name="Kashyap S."/>
            <person name="Woeh T."/>
            <person name="Valverde-Tercedor C."/>
            <person name="Sanchez-Quesada M."/>
            <person name="Jimenez Lopez C."/>
            <person name="Prozorov T."/>
        </authorList>
    </citation>
    <scope>SELF-ASSEMBLY</scope>
    <source>
        <strain>ATCC BAA-1437 / JCM 17883 / MC-1</strain>
    </source>
</reference>
<reference key="4">
    <citation type="journal article" date="2015" name="Appl. Microbiol. Biotechnol.">
        <title>Size control of in vitro synthesized magnetite crystals by the MamC protein of Magnetococcus marinus strain MC-1.</title>
        <authorList>
            <person name="Valverde-Tercedor C."/>
            <person name="Montalban-Lopez M."/>
            <person name="Perez-Gonzalez T."/>
            <person name="Sanchez-Quesada M.S."/>
            <person name="Prozorov T."/>
            <person name="Pineda-Molina E."/>
            <person name="Fernandez-Vivas M.A."/>
            <person name="Rodriguez-Navarro A.B."/>
            <person name="Trubitsyn D."/>
            <person name="Bazylinski D.A."/>
            <person name="Jimenez-Lopez C."/>
        </authorList>
    </citation>
    <scope>FUNCTION</scope>
    <scope>IRON-BINDING</scope>
    <scope>POSSIBLE TOPOLOGY</scope>
    <source>
        <strain>ATCC BAA-1437 / JCM 17883 / MC-1</strain>
    </source>
</reference>
<reference key="5">
    <citation type="journal article" date="2016" name="J. Struct. Biol.">
        <title>Structure-function studies of the magnetite-biomineralizing magnetosome-associated protein MamC.</title>
        <authorList>
            <person name="Nudelman H."/>
            <person name="Tercedor C.V."/>
            <person name="Kolusheva S."/>
            <person name="Gonzalez T.P."/>
            <person name="Widdrat M."/>
            <person name="Grimberg N."/>
            <person name="Levi H."/>
            <person name="Nelkenbaum O."/>
            <person name="Davidov G."/>
            <person name="Faivre D."/>
            <person name="Jimenez-Lopez C."/>
            <person name="Zarivach R."/>
        </authorList>
    </citation>
    <scope>FUNCTION</scope>
    <scope>DOMAIN</scope>
    <scope>IRON-BINDING</scope>
    <source>
        <strain>ATCC BAA-1437 / JCM 17883 / MC-1</strain>
    </source>
</reference>
<dbReference type="EMBL" id="CP000471">
    <property type="protein sequence ID" value="ABK44766.1"/>
    <property type="molecule type" value="Genomic_DNA"/>
</dbReference>
<dbReference type="RefSeq" id="WP_011713887.1">
    <property type="nucleotide sequence ID" value="NC_008576.1"/>
</dbReference>
<dbReference type="STRING" id="156889.Mmc1_2265"/>
<dbReference type="KEGG" id="mgm:Mmc1_2265"/>
<dbReference type="eggNOG" id="ENOG5033G8Q">
    <property type="taxonomic scope" value="Bacteria"/>
</dbReference>
<dbReference type="HOGENOM" id="CLU_1989955_0_0_5"/>
<dbReference type="Proteomes" id="UP000002586">
    <property type="component" value="Chromosome"/>
</dbReference>
<dbReference type="GO" id="GO:0110146">
    <property type="term" value="C:magnetosome membrane"/>
    <property type="evidence" value="ECO:0000314"/>
    <property type="project" value="UniProtKB"/>
</dbReference>
<dbReference type="GO" id="GO:0046872">
    <property type="term" value="F:metal ion binding"/>
    <property type="evidence" value="ECO:0007669"/>
    <property type="project" value="UniProtKB-KW"/>
</dbReference>
<dbReference type="NCBIfam" id="NF038051">
    <property type="entry name" value="MamC"/>
    <property type="match status" value="1"/>
</dbReference>